<feature type="transit peptide" description="Mitochondrion" evidence="3">
    <location>
        <begin position="1"/>
        <end position="24"/>
    </location>
</feature>
<feature type="chain" id="PRO_0000156829" description="Oxaloacetate tautomerase FAHD1, mitochondrial">
    <location>
        <begin position="25"/>
        <end position="221"/>
    </location>
</feature>
<feature type="binding site" evidence="7 16">
    <location>
        <position position="22"/>
    </location>
    <ligand>
        <name>oxalate</name>
        <dbReference type="ChEBI" id="CHEBI:30623"/>
        <note>inhibitor</note>
    </ligand>
</feature>
<feature type="binding site" evidence="4 7 15 16 17">
    <location>
        <position position="68"/>
    </location>
    <ligand>
        <name>Mg(2+)</name>
        <dbReference type="ChEBI" id="CHEBI:18420"/>
    </ligand>
</feature>
<feature type="binding site" evidence="4 7 15 16 17">
    <location>
        <position position="70"/>
    </location>
    <ligand>
        <name>Mg(2+)</name>
        <dbReference type="ChEBI" id="CHEBI:18420"/>
    </ligand>
</feature>
<feature type="binding site" evidence="4 7 15 16 17">
    <location>
        <position position="99"/>
    </location>
    <ligand>
        <name>Mg(2+)</name>
        <dbReference type="ChEBI" id="CHEBI:18420"/>
    </ligand>
</feature>
<feature type="binding site" evidence="7 16">
    <location>
        <position position="120"/>
    </location>
    <ligand>
        <name>oxalate</name>
        <dbReference type="ChEBI" id="CHEBI:30623"/>
        <note>inhibitor</note>
    </ligand>
</feature>
<feature type="binding site" evidence="7 16">
    <location>
        <position position="189"/>
    </location>
    <ligand>
        <name>oxalate</name>
        <dbReference type="ChEBI" id="CHEBI:30623"/>
        <note>inhibitor</note>
    </ligand>
</feature>
<feature type="modified residue" description="Phosphoserine" evidence="1">
    <location>
        <position position="37"/>
    </location>
</feature>
<feature type="modified residue" description="N6-acetyllysine" evidence="2">
    <location>
        <position position="110"/>
    </location>
</feature>
<feature type="modified residue" description="N6-succinyllysine" evidence="2">
    <location>
        <position position="112"/>
    </location>
</feature>
<feature type="splice variant" id="VSP_062240" description="In isoform 1.">
    <original>M</original>
    <variation>MGIM</variation>
    <location>
        <position position="1"/>
    </location>
</feature>
<feature type="splice variant" id="VSP_062241" description="In isoform 2.">
    <original>VSMTFKVEKPEY</original>
    <variation>PKVSSATLPVRLQE</variation>
    <location>
        <begin position="210"/>
        <end position="221"/>
    </location>
</feature>
<feature type="splice variant" id="VSP_062242" description="In isoform 3.">
    <original>VSMTFKVEKPEY</original>
    <variation>RQGLTLSPKLECSSAITAHCSLELPGSSNPPSASRF</variation>
    <location>
        <begin position="210"/>
        <end position="221"/>
    </location>
</feature>
<feature type="sequence variant" id="VAR_049014" description="In dbSNP:rs3743853.">
    <original>D</original>
    <variation>N</variation>
    <location>
        <position position="107"/>
    </location>
</feature>
<feature type="mutagenesis site" description="Loss of acetylpyruvate hydrolase activity, while moderate decrease in oxaloacetate decarboxylase activity." evidence="6 7">
    <original>H</original>
    <variation>A</variation>
    <location>
        <position position="27"/>
    </location>
</feature>
<feature type="mutagenesis site" description="Loss of acetylpyruvate hydrolase activity, while moderate decrease in oxaloacetate decarboxylase activity." evidence="6 7">
    <original>E</original>
    <variation>A</variation>
    <location>
        <position position="30"/>
    </location>
</feature>
<feature type="mutagenesis site" description="Loss of oxaloacetate tautomerase, oxaloacetate decarboxylase and acetylpyruvate hydrolase activities." evidence="8">
    <original>DMTAR</original>
    <variation>AMTAA</variation>
    <location>
        <begin position="99"/>
        <end position="103"/>
    </location>
</feature>
<feature type="mutagenesis site" description="Loss of both oxaloacetate decarboxylase and acetylpyruvate hydrolase activity." evidence="7">
    <original>K</original>
    <variation>A</variation>
    <location>
        <position position="120"/>
    </location>
</feature>
<feature type="sequence conflict" description="In Ref. 3; CAG38530." evidence="12" ref="3">
    <original>S</original>
    <variation>P</variation>
    <location>
        <position position="174"/>
    </location>
</feature>
<feature type="helix" evidence="18">
    <location>
        <begin position="7"/>
        <end position="9"/>
    </location>
</feature>
<feature type="helix" evidence="18">
    <location>
        <begin position="10"/>
        <end position="13"/>
    </location>
</feature>
<feature type="strand" evidence="18">
    <location>
        <begin position="16"/>
        <end position="21"/>
    </location>
</feature>
<feature type="helix" evidence="18">
    <location>
        <begin position="28"/>
        <end position="30"/>
    </location>
</feature>
<feature type="helix" evidence="18">
    <location>
        <begin position="34"/>
        <end position="36"/>
    </location>
</feature>
<feature type="strand" evidence="18">
    <location>
        <begin position="41"/>
        <end position="45"/>
    </location>
</feature>
<feature type="helix" evidence="18">
    <location>
        <begin position="46"/>
        <end position="48"/>
    </location>
</feature>
<feature type="strand" evidence="18">
    <location>
        <begin position="49"/>
        <end position="51"/>
    </location>
</feature>
<feature type="strand" evidence="18">
    <location>
        <begin position="65"/>
        <end position="67"/>
    </location>
</feature>
<feature type="strand" evidence="18">
    <location>
        <begin position="69"/>
        <end position="75"/>
    </location>
</feature>
<feature type="strand" evidence="18">
    <location>
        <begin position="79"/>
        <end position="81"/>
    </location>
</feature>
<feature type="helix" evidence="18">
    <location>
        <begin position="84"/>
        <end position="90"/>
    </location>
</feature>
<feature type="strand" evidence="18">
    <location>
        <begin position="91"/>
        <end position="98"/>
    </location>
</feature>
<feature type="helix" evidence="18">
    <location>
        <begin position="103"/>
        <end position="112"/>
    </location>
</feature>
<feature type="helix" evidence="18">
    <location>
        <begin position="117"/>
        <end position="120"/>
    </location>
</feature>
<feature type="strand" evidence="18">
    <location>
        <begin position="126"/>
        <end position="128"/>
    </location>
</feature>
<feature type="helix" evidence="18">
    <location>
        <begin position="134"/>
        <end position="136"/>
    </location>
</feature>
<feature type="strand" evidence="18">
    <location>
        <begin position="144"/>
        <end position="149"/>
    </location>
</feature>
<feature type="strand" evidence="18">
    <location>
        <begin position="152"/>
        <end position="158"/>
    </location>
</feature>
<feature type="helix" evidence="18">
    <location>
        <begin position="159"/>
        <end position="161"/>
    </location>
</feature>
<feature type="strand" evidence="18">
    <location>
        <begin position="162"/>
        <end position="164"/>
    </location>
</feature>
<feature type="helix" evidence="18">
    <location>
        <begin position="166"/>
        <end position="176"/>
    </location>
</feature>
<feature type="strand" evidence="18">
    <location>
        <begin position="184"/>
        <end position="186"/>
    </location>
</feature>
<feature type="strand" evidence="18">
    <location>
        <begin position="194"/>
        <end position="196"/>
    </location>
</feature>
<feature type="strand" evidence="18">
    <location>
        <begin position="201"/>
        <end position="206"/>
    </location>
</feature>
<feature type="turn" evidence="18">
    <location>
        <begin position="207"/>
        <end position="209"/>
    </location>
</feature>
<feature type="strand" evidence="18">
    <location>
        <begin position="210"/>
        <end position="217"/>
    </location>
</feature>
<proteinExistence type="evidence at protein level"/>
<dbReference type="EC" id="5.3.2.2" evidence="8"/>
<dbReference type="EC" id="3.7.1.5" evidence="5 7"/>
<dbReference type="EC" id="4.1.1.112" evidence="6 7"/>
<dbReference type="EMBL" id="AL136720">
    <property type="protein sequence ID" value="CAB66654.1"/>
    <property type="molecule type" value="mRNA"/>
</dbReference>
<dbReference type="EMBL" id="AK094199">
    <property type="protein sequence ID" value="BAC04308.1"/>
    <property type="molecule type" value="mRNA"/>
</dbReference>
<dbReference type="EMBL" id="CR533499">
    <property type="protein sequence ID" value="CAG38530.1"/>
    <property type="molecule type" value="mRNA"/>
</dbReference>
<dbReference type="EMBL" id="AE006639">
    <property type="protein sequence ID" value="AAK61295.1"/>
    <property type="molecule type" value="Genomic_DNA"/>
</dbReference>
<dbReference type="EMBL" id="AC012180">
    <property type="status" value="NOT_ANNOTATED_CDS"/>
    <property type="molecule type" value="Genomic_DNA"/>
</dbReference>
<dbReference type="EMBL" id="AL031722">
    <property type="status" value="NOT_ANNOTATED_CDS"/>
    <property type="molecule type" value="Genomic_DNA"/>
</dbReference>
<dbReference type="EMBL" id="BC063017">
    <property type="protein sequence ID" value="AAH63017.1"/>
    <property type="status" value="ALT_INIT"/>
    <property type="molecule type" value="mRNA"/>
</dbReference>
<dbReference type="CCDS" id="CCDS10448.2">
    <molecule id="Q6P587-4"/>
</dbReference>
<dbReference type="CCDS" id="CCDS32367.2">
    <molecule id="Q6P587-3"/>
</dbReference>
<dbReference type="CCDS" id="CCDS45380.2">
    <molecule id="Q6P587-2"/>
</dbReference>
<dbReference type="RefSeq" id="NP_001018114.2">
    <molecule id="Q6P587-3"/>
    <property type="nucleotide sequence ID" value="NM_001018104.3"/>
</dbReference>
<dbReference type="RefSeq" id="NP_001135870.2">
    <molecule id="Q6P587-2"/>
    <property type="nucleotide sequence ID" value="NM_001142398.2"/>
</dbReference>
<dbReference type="RefSeq" id="NP_112485.2">
    <molecule id="Q6P587-4"/>
    <property type="nucleotide sequence ID" value="NM_031208.4"/>
</dbReference>
<dbReference type="RefSeq" id="XP_047290685.1">
    <molecule id="Q6P587-1"/>
    <property type="nucleotide sequence ID" value="XM_047434729.1"/>
</dbReference>
<dbReference type="RefSeq" id="XP_047290686.1">
    <molecule id="Q6P587-1"/>
    <property type="nucleotide sequence ID" value="XM_047434730.1"/>
</dbReference>
<dbReference type="RefSeq" id="XP_054170050.1">
    <molecule id="Q6P587-1"/>
    <property type="nucleotide sequence ID" value="XM_054314075.1"/>
</dbReference>
<dbReference type="RefSeq" id="XP_054170051.1">
    <molecule id="Q6P587-1"/>
    <property type="nucleotide sequence ID" value="XM_054314076.1"/>
</dbReference>
<dbReference type="PDB" id="1SAW">
    <property type="method" value="X-ray"/>
    <property type="resolution" value="2.20 A"/>
    <property type="chains" value="A/B=1-221"/>
</dbReference>
<dbReference type="PDB" id="6FOG">
    <property type="method" value="X-ray"/>
    <property type="resolution" value="1.94 A"/>
    <property type="chains" value="A/B/C/D/E/F/G/H=1-221"/>
</dbReference>
<dbReference type="PDB" id="6FOH">
    <property type="method" value="X-ray"/>
    <property type="resolution" value="1.56 A"/>
    <property type="chains" value="A/B=1-221"/>
</dbReference>
<dbReference type="PDBsum" id="1SAW"/>
<dbReference type="PDBsum" id="6FOG"/>
<dbReference type="PDBsum" id="6FOH"/>
<dbReference type="SMR" id="Q6P587"/>
<dbReference type="BioGRID" id="123622">
    <property type="interactions" value="202"/>
</dbReference>
<dbReference type="FunCoup" id="Q6P587">
    <property type="interactions" value="2278"/>
</dbReference>
<dbReference type="IntAct" id="Q6P587">
    <property type="interactions" value="144"/>
</dbReference>
<dbReference type="MINT" id="Q6P587"/>
<dbReference type="STRING" id="9606.ENSP00000372112"/>
<dbReference type="ChEMBL" id="CHEMBL4523346"/>
<dbReference type="iPTMnet" id="Q6P587"/>
<dbReference type="PhosphoSitePlus" id="Q6P587"/>
<dbReference type="SwissPalm" id="Q6P587"/>
<dbReference type="BioMuta" id="FAHD1"/>
<dbReference type="DMDM" id="68566321"/>
<dbReference type="jPOST" id="Q6P587"/>
<dbReference type="MassIVE" id="Q6P587"/>
<dbReference type="PaxDb" id="9606-ENSP00000372112"/>
<dbReference type="PeptideAtlas" id="Q6P587"/>
<dbReference type="ProteomicsDB" id="3012"/>
<dbReference type="ProteomicsDB" id="66992">
    <molecule id="Q6P587-1"/>
</dbReference>
<dbReference type="ProteomicsDB" id="66993">
    <molecule id="Q6P587-2"/>
</dbReference>
<dbReference type="Pumba" id="Q6P587"/>
<dbReference type="Antibodypedia" id="56108">
    <property type="antibodies" value="69 antibodies from 13 providers"/>
</dbReference>
<dbReference type="DNASU" id="81889"/>
<dbReference type="Ensembl" id="ENST00000382666.6">
    <molecule id="Q6P587-3"/>
    <property type="protein sequence ID" value="ENSP00000372112.5"/>
    <property type="gene ID" value="ENSG00000180185.13"/>
</dbReference>
<dbReference type="Ensembl" id="ENST00000382668.8">
    <molecule id="Q6P587-2"/>
    <property type="protein sequence ID" value="ENSP00000372114.5"/>
    <property type="gene ID" value="ENSG00000180185.13"/>
</dbReference>
<dbReference type="Ensembl" id="ENST00000427358.5">
    <molecule id="Q6P587-4"/>
    <property type="protein sequence ID" value="ENSP00000398053.3"/>
    <property type="gene ID" value="ENSG00000180185.13"/>
</dbReference>
<dbReference type="GeneID" id="81889"/>
<dbReference type="KEGG" id="hsa:81889"/>
<dbReference type="MANE-Select" id="ENST00000427358.5">
    <property type="protein sequence ID" value="ENSP00000398053.3"/>
    <property type="RefSeq nucleotide sequence ID" value="NM_031208.4"/>
    <property type="RefSeq protein sequence ID" value="NP_112485.2"/>
</dbReference>
<dbReference type="UCSC" id="uc002cnc.2">
    <molecule id="Q6P587-4"/>
    <property type="organism name" value="human"/>
</dbReference>
<dbReference type="AGR" id="HGNC:14169"/>
<dbReference type="CTD" id="81889"/>
<dbReference type="DisGeNET" id="81889"/>
<dbReference type="GeneCards" id="FAHD1"/>
<dbReference type="HGNC" id="HGNC:14169">
    <property type="gene designation" value="FAHD1"/>
</dbReference>
<dbReference type="HPA" id="ENSG00000180185">
    <property type="expression patterns" value="Tissue enhanced (kidney)"/>
</dbReference>
<dbReference type="MalaCards" id="FAHD1"/>
<dbReference type="MIM" id="616320">
    <property type="type" value="gene"/>
</dbReference>
<dbReference type="neXtProt" id="NX_Q6P587"/>
<dbReference type="OpenTargets" id="ENSG00000180185"/>
<dbReference type="PharmGKB" id="PA25551"/>
<dbReference type="VEuPathDB" id="HostDB:ENSG00000180185"/>
<dbReference type="eggNOG" id="KOG1535">
    <property type="taxonomic scope" value="Eukaryota"/>
</dbReference>
<dbReference type="GeneTree" id="ENSGT00940000160452"/>
<dbReference type="HOGENOM" id="CLU_028458_5_0_1"/>
<dbReference type="InParanoid" id="Q6P587"/>
<dbReference type="OMA" id="NCRKVIC"/>
<dbReference type="OrthoDB" id="411064at2759"/>
<dbReference type="PAN-GO" id="Q6P587">
    <property type="GO annotations" value="2 GO annotations based on evolutionary models"/>
</dbReference>
<dbReference type="PhylomeDB" id="Q6P587"/>
<dbReference type="TreeFam" id="TF300911"/>
<dbReference type="BRENDA" id="3.7.1.5">
    <property type="organism ID" value="2681"/>
</dbReference>
<dbReference type="BRENDA" id="4.1.1.112">
    <property type="organism ID" value="2681"/>
</dbReference>
<dbReference type="PathwayCommons" id="Q6P587"/>
<dbReference type="Reactome" id="R-HSA-70268">
    <property type="pathway name" value="Pyruvate metabolism"/>
</dbReference>
<dbReference type="SABIO-RK" id="Q6P587"/>
<dbReference type="SignaLink" id="Q6P587"/>
<dbReference type="BioGRID-ORCS" id="81889">
    <property type="hits" value="14 hits in 1159 CRISPR screens"/>
</dbReference>
<dbReference type="CD-CODE" id="91857CE7">
    <property type="entry name" value="Nucleolus"/>
</dbReference>
<dbReference type="ChiTaRS" id="FAHD1">
    <property type="organism name" value="human"/>
</dbReference>
<dbReference type="EvolutionaryTrace" id="Q6P587"/>
<dbReference type="GeneWiki" id="FAHD1"/>
<dbReference type="GenomeRNAi" id="81889"/>
<dbReference type="Pharos" id="Q6P587">
    <property type="development level" value="Tbio"/>
</dbReference>
<dbReference type="PRO" id="PR:Q6P587"/>
<dbReference type="Proteomes" id="UP000005640">
    <property type="component" value="Chromosome 16"/>
</dbReference>
<dbReference type="RNAct" id="Q6P587">
    <property type="molecule type" value="protein"/>
</dbReference>
<dbReference type="Bgee" id="ENSG00000180185">
    <property type="expression patterns" value="Expressed in kidney epithelium and 194 other cell types or tissues"/>
</dbReference>
<dbReference type="GO" id="GO:0005829">
    <property type="term" value="C:cytosol"/>
    <property type="evidence" value="ECO:0000314"/>
    <property type="project" value="UniProtKB"/>
</dbReference>
<dbReference type="GO" id="GO:0005759">
    <property type="term" value="C:mitochondrial matrix"/>
    <property type="evidence" value="ECO:0000304"/>
    <property type="project" value="Reactome"/>
</dbReference>
<dbReference type="GO" id="GO:0005739">
    <property type="term" value="C:mitochondrion"/>
    <property type="evidence" value="ECO:0000314"/>
    <property type="project" value="UniProtKB"/>
</dbReference>
<dbReference type="GO" id="GO:0005654">
    <property type="term" value="C:nucleoplasm"/>
    <property type="evidence" value="ECO:0000314"/>
    <property type="project" value="HPA"/>
</dbReference>
<dbReference type="GO" id="GO:0018773">
    <property type="term" value="F:acetylpyruvate hydrolase activity"/>
    <property type="evidence" value="ECO:0000314"/>
    <property type="project" value="UniProtKB"/>
</dbReference>
<dbReference type="GO" id="GO:0047621">
    <property type="term" value="F:acylpyruvate hydrolase activity"/>
    <property type="evidence" value="ECO:0007669"/>
    <property type="project" value="UniProtKB-EC"/>
</dbReference>
<dbReference type="GO" id="GO:0034545">
    <property type="term" value="F:fumarylpyruvate hydrolase activity"/>
    <property type="evidence" value="ECO:0000314"/>
    <property type="project" value="UniProtKB"/>
</dbReference>
<dbReference type="GO" id="GO:0046872">
    <property type="term" value="F:metal ion binding"/>
    <property type="evidence" value="ECO:0007669"/>
    <property type="project" value="UniProtKB-KW"/>
</dbReference>
<dbReference type="GO" id="GO:0008948">
    <property type="term" value="F:oxaloacetate decarboxylase activity"/>
    <property type="evidence" value="ECO:0000314"/>
    <property type="project" value="UniProtKB"/>
</dbReference>
<dbReference type="GO" id="GO:0050163">
    <property type="term" value="F:oxaloacetate tautomerase activity"/>
    <property type="evidence" value="ECO:0000314"/>
    <property type="project" value="UniProtKB"/>
</dbReference>
<dbReference type="GO" id="GO:0006107">
    <property type="term" value="P:oxaloacetate metabolic process"/>
    <property type="evidence" value="ECO:0000314"/>
    <property type="project" value="UniProtKB"/>
</dbReference>
<dbReference type="GO" id="GO:0006090">
    <property type="term" value="P:pyruvate metabolic process"/>
    <property type="evidence" value="ECO:0007669"/>
    <property type="project" value="Ensembl"/>
</dbReference>
<dbReference type="FunFam" id="3.90.850.10:FF:000003">
    <property type="entry name" value="Fumarylacetoacetate hydrolase domain-containing 1"/>
    <property type="match status" value="1"/>
</dbReference>
<dbReference type="Gene3D" id="3.90.850.10">
    <property type="entry name" value="Fumarylacetoacetase-like, C-terminal domain"/>
    <property type="match status" value="1"/>
</dbReference>
<dbReference type="InterPro" id="IPR011234">
    <property type="entry name" value="Fumarylacetoacetase-like_C"/>
</dbReference>
<dbReference type="InterPro" id="IPR036663">
    <property type="entry name" value="Fumarylacetoacetase_C_sf"/>
</dbReference>
<dbReference type="NCBIfam" id="NF007967">
    <property type="entry name" value="PRK10691.1"/>
    <property type="match status" value="1"/>
</dbReference>
<dbReference type="PANTHER" id="PTHR11820">
    <property type="entry name" value="ACYLPYRUVASE"/>
    <property type="match status" value="1"/>
</dbReference>
<dbReference type="PANTHER" id="PTHR11820:SF106">
    <property type="entry name" value="ACYLPYRUVASE FAHD1, MITOCHONDRIAL"/>
    <property type="match status" value="1"/>
</dbReference>
<dbReference type="Pfam" id="PF01557">
    <property type="entry name" value="FAA_hydrolase"/>
    <property type="match status" value="1"/>
</dbReference>
<dbReference type="SUPFAM" id="SSF56529">
    <property type="entry name" value="FAH"/>
    <property type="match status" value="1"/>
</dbReference>
<accession>Q6P587</accession>
<accession>B1AK40</accession>
<accession>B1AK41</accession>
<accession>Q6FIC7</accession>
<accession>Q96RY1</accession>
<accession>Q9H0N6</accession>
<name>FAHD1_HUMAN</name>
<evidence type="ECO:0000250" key="1">
    <source>
        <dbReference type="UniProtKB" id="Q6AYQ8"/>
    </source>
</evidence>
<evidence type="ECO:0000250" key="2">
    <source>
        <dbReference type="UniProtKB" id="Q8R0F8"/>
    </source>
</evidence>
<evidence type="ECO:0000255" key="3"/>
<evidence type="ECO:0000269" key="4">
    <source>
    </source>
</evidence>
<evidence type="ECO:0000269" key="5">
    <source>
    </source>
</evidence>
<evidence type="ECO:0000269" key="6">
    <source>
    </source>
</evidence>
<evidence type="ECO:0000269" key="7">
    <source>
    </source>
</evidence>
<evidence type="ECO:0000269" key="8">
    <source>
    </source>
</evidence>
<evidence type="ECO:0000303" key="9">
    <source>
    </source>
</evidence>
<evidence type="ECO:0000303" key="10">
    <source>
    </source>
</evidence>
<evidence type="ECO:0000303" key="11">
    <source>
    </source>
</evidence>
<evidence type="ECO:0000305" key="12"/>
<evidence type="ECO:0000305" key="13">
    <source>
    </source>
</evidence>
<evidence type="ECO:0000312" key="14">
    <source>
        <dbReference type="HGNC" id="HGNC:14169"/>
    </source>
</evidence>
<evidence type="ECO:0007744" key="15">
    <source>
        <dbReference type="PDB" id="1SAW"/>
    </source>
</evidence>
<evidence type="ECO:0007744" key="16">
    <source>
        <dbReference type="PDB" id="6FOG"/>
    </source>
</evidence>
<evidence type="ECO:0007744" key="17">
    <source>
        <dbReference type="PDB" id="6FOH"/>
    </source>
</evidence>
<evidence type="ECO:0007829" key="18">
    <source>
        <dbReference type="PDB" id="6FOH"/>
    </source>
</evidence>
<keyword id="KW-0002">3D-structure</keyword>
<keyword id="KW-0007">Acetylation</keyword>
<keyword id="KW-0024">Alternative initiation</keyword>
<keyword id="KW-0025">Alternative splicing</keyword>
<keyword id="KW-0963">Cytoplasm</keyword>
<keyword id="KW-0378">Hydrolase</keyword>
<keyword id="KW-0413">Isomerase</keyword>
<keyword id="KW-0456">Lyase</keyword>
<keyword id="KW-0460">Magnesium</keyword>
<keyword id="KW-0464">Manganese</keyword>
<keyword id="KW-0479">Metal-binding</keyword>
<keyword id="KW-0496">Mitochondrion</keyword>
<keyword id="KW-0597">Phosphoprotein</keyword>
<keyword id="KW-1267">Proteomics identification</keyword>
<keyword id="KW-1185">Reference proteome</keyword>
<keyword id="KW-0809">Transit peptide</keyword>
<gene>
    <name evidence="9 14" type="primary">FAHD1</name>
    <name type="synonym">C16orf36</name>
    <name type="synonym">YISKL</name>
</gene>
<reference key="1">
    <citation type="journal article" date="2001" name="Genome Res.">
        <title>Towards a catalog of human genes and proteins: sequencing and analysis of 500 novel complete protein coding human cDNAs.</title>
        <authorList>
            <person name="Wiemann S."/>
            <person name="Weil B."/>
            <person name="Wellenreuther R."/>
            <person name="Gassenhuber J."/>
            <person name="Glassl S."/>
            <person name="Ansorge W."/>
            <person name="Boecher M."/>
            <person name="Bloecker H."/>
            <person name="Bauersachs S."/>
            <person name="Blum H."/>
            <person name="Lauber J."/>
            <person name="Duesterhoeft A."/>
            <person name="Beyer A."/>
            <person name="Koehrer K."/>
            <person name="Strack N."/>
            <person name="Mewes H.-W."/>
            <person name="Ottenwaelder B."/>
            <person name="Obermaier B."/>
            <person name="Tampe J."/>
            <person name="Heubner D."/>
            <person name="Wambutt R."/>
            <person name="Korn B."/>
            <person name="Klein M."/>
            <person name="Poustka A."/>
        </authorList>
    </citation>
    <scope>NUCLEOTIDE SEQUENCE [LARGE SCALE MRNA] (ISOFORM 1)</scope>
    <source>
        <tissue>Kidney</tissue>
    </source>
</reference>
<reference key="2">
    <citation type="journal article" date="2004" name="Nat. Genet.">
        <title>Complete sequencing and characterization of 21,243 full-length human cDNAs.</title>
        <authorList>
            <person name="Ota T."/>
            <person name="Suzuki Y."/>
            <person name="Nishikawa T."/>
            <person name="Otsuki T."/>
            <person name="Sugiyama T."/>
            <person name="Irie R."/>
            <person name="Wakamatsu A."/>
            <person name="Hayashi K."/>
            <person name="Sato H."/>
            <person name="Nagai K."/>
            <person name="Kimura K."/>
            <person name="Makita H."/>
            <person name="Sekine M."/>
            <person name="Obayashi M."/>
            <person name="Nishi T."/>
            <person name="Shibahara T."/>
            <person name="Tanaka T."/>
            <person name="Ishii S."/>
            <person name="Yamamoto J."/>
            <person name="Saito K."/>
            <person name="Kawai Y."/>
            <person name="Isono Y."/>
            <person name="Nakamura Y."/>
            <person name="Nagahari K."/>
            <person name="Murakami K."/>
            <person name="Yasuda T."/>
            <person name="Iwayanagi T."/>
            <person name="Wagatsuma M."/>
            <person name="Shiratori A."/>
            <person name="Sudo H."/>
            <person name="Hosoiri T."/>
            <person name="Kaku Y."/>
            <person name="Kodaira H."/>
            <person name="Kondo H."/>
            <person name="Sugawara M."/>
            <person name="Takahashi M."/>
            <person name="Kanda K."/>
            <person name="Yokoi T."/>
            <person name="Furuya T."/>
            <person name="Kikkawa E."/>
            <person name="Omura Y."/>
            <person name="Abe K."/>
            <person name="Kamihara K."/>
            <person name="Katsuta N."/>
            <person name="Sato K."/>
            <person name="Tanikawa M."/>
            <person name="Yamazaki M."/>
            <person name="Ninomiya K."/>
            <person name="Ishibashi T."/>
            <person name="Yamashita H."/>
            <person name="Murakawa K."/>
            <person name="Fujimori K."/>
            <person name="Tanai H."/>
            <person name="Kimata M."/>
            <person name="Watanabe M."/>
            <person name="Hiraoka S."/>
            <person name="Chiba Y."/>
            <person name="Ishida S."/>
            <person name="Ono Y."/>
            <person name="Takiguchi S."/>
            <person name="Watanabe S."/>
            <person name="Yosida M."/>
            <person name="Hotuta T."/>
            <person name="Kusano J."/>
            <person name="Kanehori K."/>
            <person name="Takahashi-Fujii A."/>
            <person name="Hara H."/>
            <person name="Tanase T.-O."/>
            <person name="Nomura Y."/>
            <person name="Togiya S."/>
            <person name="Komai F."/>
            <person name="Hara R."/>
            <person name="Takeuchi K."/>
            <person name="Arita M."/>
            <person name="Imose N."/>
            <person name="Musashino K."/>
            <person name="Yuuki H."/>
            <person name="Oshima A."/>
            <person name="Sasaki N."/>
            <person name="Aotsuka S."/>
            <person name="Yoshikawa Y."/>
            <person name="Matsunawa H."/>
            <person name="Ichihara T."/>
            <person name="Shiohata N."/>
            <person name="Sano S."/>
            <person name="Moriya S."/>
            <person name="Momiyama H."/>
            <person name="Satoh N."/>
            <person name="Takami S."/>
            <person name="Terashima Y."/>
            <person name="Suzuki O."/>
            <person name="Nakagawa S."/>
            <person name="Senoh A."/>
            <person name="Mizoguchi H."/>
            <person name="Goto Y."/>
            <person name="Shimizu F."/>
            <person name="Wakebe H."/>
            <person name="Hishigaki H."/>
            <person name="Watanabe T."/>
            <person name="Sugiyama A."/>
            <person name="Takemoto M."/>
            <person name="Kawakami B."/>
            <person name="Yamazaki M."/>
            <person name="Watanabe K."/>
            <person name="Kumagai A."/>
            <person name="Itakura S."/>
            <person name="Fukuzumi Y."/>
            <person name="Fujimori Y."/>
            <person name="Komiyama M."/>
            <person name="Tashiro H."/>
            <person name="Tanigami A."/>
            <person name="Fujiwara T."/>
            <person name="Ono T."/>
            <person name="Yamada K."/>
            <person name="Fujii Y."/>
            <person name="Ozaki K."/>
            <person name="Hirao M."/>
            <person name="Ohmori Y."/>
            <person name="Kawabata A."/>
            <person name="Hikiji T."/>
            <person name="Kobatake N."/>
            <person name="Inagaki H."/>
            <person name="Ikema Y."/>
            <person name="Okamoto S."/>
            <person name="Okitani R."/>
            <person name="Kawakami T."/>
            <person name="Noguchi S."/>
            <person name="Itoh T."/>
            <person name="Shigeta K."/>
            <person name="Senba T."/>
            <person name="Matsumura K."/>
            <person name="Nakajima Y."/>
            <person name="Mizuno T."/>
            <person name="Morinaga M."/>
            <person name="Sasaki M."/>
            <person name="Togashi T."/>
            <person name="Oyama M."/>
            <person name="Hata H."/>
            <person name="Watanabe M."/>
            <person name="Komatsu T."/>
            <person name="Mizushima-Sugano J."/>
            <person name="Satoh T."/>
            <person name="Shirai Y."/>
            <person name="Takahashi Y."/>
            <person name="Nakagawa K."/>
            <person name="Okumura K."/>
            <person name="Nagase T."/>
            <person name="Nomura N."/>
            <person name="Kikuchi H."/>
            <person name="Masuho Y."/>
            <person name="Yamashita R."/>
            <person name="Nakai K."/>
            <person name="Yada T."/>
            <person name="Nakamura Y."/>
            <person name="Ohara O."/>
            <person name="Isogai T."/>
            <person name="Sugano S."/>
        </authorList>
    </citation>
    <scope>NUCLEOTIDE SEQUENCE [LARGE SCALE MRNA] (ISOFORM 1)</scope>
    <source>
        <tissue>Glial tumor</tissue>
    </source>
</reference>
<reference key="3">
    <citation type="submission" date="2004-06" db="EMBL/GenBank/DDBJ databases">
        <title>Cloning of human full open reading frames in Gateway(TM) system entry vector (pDONR201).</title>
        <authorList>
            <person name="Ebert L."/>
            <person name="Schick M."/>
            <person name="Neubert P."/>
            <person name="Schatten R."/>
            <person name="Henze S."/>
            <person name="Korn B."/>
        </authorList>
    </citation>
    <scope>NUCLEOTIDE SEQUENCE [LARGE SCALE MRNA] (ISOFORM 1)</scope>
</reference>
<reference key="4">
    <citation type="journal article" date="2001" name="Hum. Mol. Genet.">
        <title>Sequence, structure and pathology of the fully annotated terminal 2 Mb of the short arm of human chromosome 16.</title>
        <authorList>
            <person name="Daniels R.J."/>
            <person name="Peden J.F."/>
            <person name="Lloyd C."/>
            <person name="Horsley S.W."/>
            <person name="Clark K."/>
            <person name="Tufarelli C."/>
            <person name="Kearney L."/>
            <person name="Buckle V.J."/>
            <person name="Doggett N.A."/>
            <person name="Flint J."/>
            <person name="Higgs D.R."/>
        </authorList>
    </citation>
    <scope>NUCLEOTIDE SEQUENCE [LARGE SCALE GENOMIC DNA]</scope>
</reference>
<reference key="5">
    <citation type="journal article" date="2004" name="Nature">
        <title>The sequence and analysis of duplication-rich human chromosome 16.</title>
        <authorList>
            <person name="Martin J."/>
            <person name="Han C."/>
            <person name="Gordon L.A."/>
            <person name="Terry A."/>
            <person name="Prabhakar S."/>
            <person name="She X."/>
            <person name="Xie G."/>
            <person name="Hellsten U."/>
            <person name="Chan Y.M."/>
            <person name="Altherr M."/>
            <person name="Couronne O."/>
            <person name="Aerts A."/>
            <person name="Bajorek E."/>
            <person name="Black S."/>
            <person name="Blumer H."/>
            <person name="Branscomb E."/>
            <person name="Brown N.C."/>
            <person name="Bruno W.J."/>
            <person name="Buckingham J.M."/>
            <person name="Callen D.F."/>
            <person name="Campbell C.S."/>
            <person name="Campbell M.L."/>
            <person name="Campbell E.W."/>
            <person name="Caoile C."/>
            <person name="Challacombe J.F."/>
            <person name="Chasteen L.A."/>
            <person name="Chertkov O."/>
            <person name="Chi H.C."/>
            <person name="Christensen M."/>
            <person name="Clark L.M."/>
            <person name="Cohn J.D."/>
            <person name="Denys M."/>
            <person name="Detter J.C."/>
            <person name="Dickson M."/>
            <person name="Dimitrijevic-Bussod M."/>
            <person name="Escobar J."/>
            <person name="Fawcett J.J."/>
            <person name="Flowers D."/>
            <person name="Fotopulos D."/>
            <person name="Glavina T."/>
            <person name="Gomez M."/>
            <person name="Gonzales E."/>
            <person name="Goodstein D."/>
            <person name="Goodwin L.A."/>
            <person name="Grady D.L."/>
            <person name="Grigoriev I."/>
            <person name="Groza M."/>
            <person name="Hammon N."/>
            <person name="Hawkins T."/>
            <person name="Haydu L."/>
            <person name="Hildebrand C.E."/>
            <person name="Huang W."/>
            <person name="Israni S."/>
            <person name="Jett J."/>
            <person name="Jewett P.B."/>
            <person name="Kadner K."/>
            <person name="Kimball H."/>
            <person name="Kobayashi A."/>
            <person name="Krawczyk M.-C."/>
            <person name="Leyba T."/>
            <person name="Longmire J.L."/>
            <person name="Lopez F."/>
            <person name="Lou Y."/>
            <person name="Lowry S."/>
            <person name="Ludeman T."/>
            <person name="Manohar C.F."/>
            <person name="Mark G.A."/>
            <person name="McMurray K.L."/>
            <person name="Meincke L.J."/>
            <person name="Morgan J."/>
            <person name="Moyzis R.K."/>
            <person name="Mundt M.O."/>
            <person name="Munk A.C."/>
            <person name="Nandkeshwar R.D."/>
            <person name="Pitluck S."/>
            <person name="Pollard M."/>
            <person name="Predki P."/>
            <person name="Parson-Quintana B."/>
            <person name="Ramirez L."/>
            <person name="Rash S."/>
            <person name="Retterer J."/>
            <person name="Ricke D.O."/>
            <person name="Robinson D.L."/>
            <person name="Rodriguez A."/>
            <person name="Salamov A."/>
            <person name="Saunders E.H."/>
            <person name="Scott D."/>
            <person name="Shough T."/>
            <person name="Stallings R.L."/>
            <person name="Stalvey M."/>
            <person name="Sutherland R.D."/>
            <person name="Tapia R."/>
            <person name="Tesmer J.G."/>
            <person name="Thayer N."/>
            <person name="Thompson L.S."/>
            <person name="Tice H."/>
            <person name="Torney D.C."/>
            <person name="Tran-Gyamfi M."/>
            <person name="Tsai M."/>
            <person name="Ulanovsky L.E."/>
            <person name="Ustaszewska A."/>
            <person name="Vo N."/>
            <person name="White P.S."/>
            <person name="Williams A.L."/>
            <person name="Wills P.L."/>
            <person name="Wu J.-R."/>
            <person name="Wu K."/>
            <person name="Yang J."/>
            <person name="DeJong P."/>
            <person name="Bruce D."/>
            <person name="Doggett N.A."/>
            <person name="Deaven L."/>
            <person name="Schmutz J."/>
            <person name="Grimwood J."/>
            <person name="Richardson P."/>
            <person name="Rokhsar D.S."/>
            <person name="Eichler E.E."/>
            <person name="Gilna P."/>
            <person name="Lucas S.M."/>
            <person name="Myers R.M."/>
            <person name="Rubin E.M."/>
            <person name="Pennacchio L.A."/>
        </authorList>
    </citation>
    <scope>NUCLEOTIDE SEQUENCE [LARGE SCALE GENOMIC DNA]</scope>
</reference>
<reference key="6">
    <citation type="journal article" date="2004" name="Genome Res.">
        <title>The status, quality, and expansion of the NIH full-length cDNA project: the Mammalian Gene Collection (MGC).</title>
        <authorList>
            <consortium name="The MGC Project Team"/>
        </authorList>
    </citation>
    <scope>NUCLEOTIDE SEQUENCE [LARGE SCALE MRNA] (ISOFORM 2)</scope>
    <source>
        <tissue>Pancreas</tissue>
    </source>
</reference>
<reference key="7">
    <citation type="journal article" date="2011" name="BMC Syst. Biol.">
        <title>Initial characterization of the human central proteome.</title>
        <authorList>
            <person name="Burkard T.R."/>
            <person name="Planyavsky M."/>
            <person name="Kaupe I."/>
            <person name="Breitwieser F.P."/>
            <person name="Buerckstuemmer T."/>
            <person name="Bennett K.L."/>
            <person name="Superti-Furga G."/>
            <person name="Colinge J."/>
        </authorList>
    </citation>
    <scope>IDENTIFICATION BY MASS SPECTROMETRY [LARGE SCALE ANALYSIS]</scope>
</reference>
<reference key="8">
    <citation type="journal article" date="2011" name="J. Biol. Chem.">
        <title>Identification of human fumarylacetoacetate hydrolase domain containing protein 1 (FAHD1) as a novel mitochondrial acylpyruvase.</title>
        <authorList>
            <person name="Pircher H."/>
            <person name="Straganz G.D."/>
            <person name="Ehehalt D."/>
            <person name="Morrow G."/>
            <person name="Tanguay R.M."/>
            <person name="Jansen-Durr P."/>
        </authorList>
    </citation>
    <scope>FUNCTION</scope>
    <scope>CATALYTIC ACTIVITY</scope>
    <scope>SUBSTRATE SPECIFICITY</scope>
    <scope>KINETIC PARAMETERS</scope>
    <scope>COFACTOR</scope>
    <scope>MUTAGENESIS OF 99-ASP--ARG-103</scope>
    <scope>SUBCELLULAR LOCATION</scope>
    <scope>TISSUE SPECIFICITY</scope>
</reference>
<reference key="9">
    <citation type="journal article" date="2014" name="J. Proteomics">
        <title>An enzyme assisted RP-RPLC approach for in-depth analysis of human liver phosphoproteome.</title>
        <authorList>
            <person name="Bian Y."/>
            <person name="Song C."/>
            <person name="Cheng K."/>
            <person name="Dong M."/>
            <person name="Wang F."/>
            <person name="Huang J."/>
            <person name="Sun D."/>
            <person name="Wang L."/>
            <person name="Ye M."/>
            <person name="Zou H."/>
        </authorList>
    </citation>
    <scope>IDENTIFICATION BY MASS SPECTROMETRY [LARGE SCALE ANALYSIS]</scope>
    <source>
        <tissue>Liver</tissue>
    </source>
</reference>
<reference key="10">
    <citation type="journal article" date="2015" name="J. Biol. Chem.">
        <title>Identification of FAH domain containing protein 1 (FAHD1) as oxaloacetate decarboxylase.</title>
        <authorList>
            <person name="Pircher H."/>
            <person name="von Grafenstein S."/>
            <person name="Diener T."/>
            <person name="Metzger C."/>
            <person name="Albertini E."/>
            <person name="Taferner A."/>
            <person name="Unterluggauer H."/>
            <person name="Kramer C."/>
            <person name="Liedl K.R."/>
            <person name="Jansen-Durr P."/>
        </authorList>
    </citation>
    <scope>FUNCTION</scope>
    <scope>CATALYTIC ACTIVITY</scope>
    <scope>BIOPHYSICOCHEMICAL PROPERTIES</scope>
    <scope>MUTAGENESIS OF HIS-27; GLU-30 AND 99-ASP--ARG-103</scope>
</reference>
<reference key="11">
    <citation type="journal article" date="2015" name="Proteomics">
        <title>N-terminome analysis of the human mitochondrial proteome.</title>
        <authorList>
            <person name="Vaca Jacome A.S."/>
            <person name="Rabilloud T."/>
            <person name="Schaeffer-Reiss C."/>
            <person name="Rompais M."/>
            <person name="Ayoub D."/>
            <person name="Lane L."/>
            <person name="Bairoch A."/>
            <person name="Van Dorsselaer A."/>
            <person name="Carapito C."/>
        </authorList>
    </citation>
    <scope>IDENTIFICATION BY MASS SPECTROMETRY [LARGE SCALE ANALYSIS]</scope>
</reference>
<reference key="12">
    <citation type="journal article" date="2024" name="Nat. Commun.">
        <title>A universal metabolite repair enzyme removes a strong inhibitor of the TCA cycle.</title>
        <authorList>
            <person name="Zmuda A.J."/>
            <person name="Kang X."/>
            <person name="Wissbroecker K.B."/>
            <person name="Freund Saxhaug K."/>
            <person name="Costa K.C."/>
            <person name="Hegeman A.D."/>
            <person name="Niehaus T.D."/>
        </authorList>
    </citation>
    <scope>FUNCTION</scope>
    <scope>CATALYTIC ACTIVITY</scope>
    <scope>BIOPHYSICOCHEMICAL PROPERTIES</scope>
    <scope>MUTAGENESIS OF 99-ASP--ARG-103</scope>
</reference>
<reference evidence="15" key="13">
    <citation type="journal article" date="2004" name="Biol. Chem.">
        <title>X-ray structure of fumarylacetoacetate hydrolase family member Homo sapiens FLJ36880.</title>
        <authorList>
            <person name="Manjasetty B.A."/>
            <person name="Niesen F.H."/>
            <person name="Delbrueck H."/>
            <person name="Goetz F."/>
            <person name="Sievert V."/>
            <person name="Buessow K."/>
            <person name="Behlke J."/>
            <person name="Heinemann U."/>
        </authorList>
    </citation>
    <scope>X-RAY CRYSTALLOGRAPHY (2.2 ANGSTROMS) IN COMPLEX WITH MG(2+)</scope>
    <scope>SUBUNIT</scope>
</reference>
<reference evidence="16 17" key="14">
    <citation type="journal article" date="2018" name="Biochem. J.">
        <title>Structural basis for the bi-functionality of human oxaloacetate decarboxylase FAHD1.</title>
        <authorList>
            <person name="Weiss A.K.H."/>
            <person name="Naschberger A."/>
            <person name="Loeffler J.R."/>
            <person name="Gstach H."/>
            <person name="Bowler M.W."/>
            <person name="Holzknecht M."/>
            <person name="Cappuccio E."/>
            <person name="Pittl A."/>
            <person name="Etemad S."/>
            <person name="Dunzendorfer-Matt T."/>
            <person name="Scheffzek K."/>
            <person name="Liedl K.R."/>
            <person name="Jansen-Durr P."/>
        </authorList>
    </citation>
    <scope>X-RAY CRYSTALLOGRAPHY (1.56 ANGSTROMS) IN COMPLEXES WITH MG(2+) AND OXALATE INHIBITOR</scope>
    <scope>FUNCTION</scope>
    <scope>CATALYTIC ACTIVITY</scope>
    <scope>COFACTOR</scope>
    <scope>BIOPHYSICOCHEMICAL PROPERTIES</scope>
    <scope>MUTAGENESIS OF HIS-27; GLU-30; 99-ASP--ARG-103 AND LYS-120</scope>
</reference>
<organism>
    <name type="scientific">Homo sapiens</name>
    <name type="common">Human</name>
    <dbReference type="NCBI Taxonomy" id="9606"/>
    <lineage>
        <taxon>Eukaryota</taxon>
        <taxon>Metazoa</taxon>
        <taxon>Chordata</taxon>
        <taxon>Craniata</taxon>
        <taxon>Vertebrata</taxon>
        <taxon>Euteleostomi</taxon>
        <taxon>Mammalia</taxon>
        <taxon>Eutheria</taxon>
        <taxon>Euarchontoglires</taxon>
        <taxon>Primates</taxon>
        <taxon>Haplorrhini</taxon>
        <taxon>Catarrhini</taxon>
        <taxon>Hominidae</taxon>
        <taxon>Homo</taxon>
    </lineage>
</organism>
<protein>
    <recommendedName>
        <fullName evidence="12">Oxaloacetate tautomerase FAHD1, mitochondrial</fullName>
        <ecNumber evidence="8">5.3.2.2</ecNumber>
    </recommendedName>
    <alternativeName>
        <fullName evidence="9">Acylpyruvase FAHD1</fullName>
        <ecNumber evidence="5 7">3.7.1.5</ecNumber>
    </alternativeName>
    <alternativeName>
        <fullName evidence="11">Fumarylacetoacetate hydrolase domain-containing protein 1</fullName>
        <shortName evidence="11">FAH domain-containing protein 1</shortName>
    </alternativeName>
    <alternativeName>
        <fullName evidence="10">Oxaloacetate decarboxylase</fullName>
        <shortName evidence="10">OAA decarboxylase</shortName>
        <shortName evidence="10 11">ODx</shortName>
        <ecNumber evidence="6 7">4.1.1.112</ecNumber>
    </alternativeName>
    <alternativeName>
        <fullName>YisK-like protein</fullName>
    </alternativeName>
</protein>
<sequence length="221" mass="24542">MAASRPLSRFWEWGKNIVCVGRNYADHVREMRSAVLSEPVLFLKPSTAYAPEGSPILMPAYTRNLHHELELGVVMGKRCRAVPEAAAMDYVGGYALCLDMTARDVQDECKKKGLPWTLAKSFTASCPVSAFVPKEKIPDPHKLKLWLKVNGELRQEGETSSMIFSIPYIISYVSKIITLEEGDIILTGTPKGVGPVKENDEIEAGIHGLVSMTFKVEKPEY</sequence>
<comment type="function">
    <text evidence="5 6 7 8">Tautomerase that converts enol-oxaloacetate, a strong inhibitor of succinate dehydrogenase, to the physiological keto form of oxaloacetate (PubMed:38287013). It is thereby required to maximize aerobic respiration efficiency by preventing succinate dehydrogenase inhibition (PubMed:38287013). Also acts as a weak oxaloacetate decarboxylase (ODx), catalyzing the decarboxylation of oxaloacetate (OAA) to pyruvate and CO(2), and as such is likely a regulatory enzyme in the TCA cycle (PubMed:25575590, PubMed:30348641). Also displays acylpyruvase activity, being able to hydrolyze acetylpyruvate and fumarylpyruvate in vitro (PubMed:21878618, PubMed:30348641). Exhibits only a weak hydrolase activity on methylacetopyruvate and acetylacetone, and no activity toward acetoacetyl-CoA (PubMed:21878618).</text>
</comment>
<comment type="catalytic activity">
    <reaction evidence="8">
        <text>oxaloacetate = enol-oxaloacetate</text>
        <dbReference type="Rhea" id="RHEA:16021"/>
        <dbReference type="ChEBI" id="CHEBI:16452"/>
        <dbReference type="ChEBI" id="CHEBI:17479"/>
        <dbReference type="EC" id="5.3.2.2"/>
    </reaction>
    <physiologicalReaction direction="right-to-left" evidence="8">
        <dbReference type="Rhea" id="RHEA:16023"/>
    </physiologicalReaction>
</comment>
<comment type="catalytic activity">
    <reaction evidence="6 7">
        <text>oxaloacetate + H(+) = pyruvate + CO2</text>
        <dbReference type="Rhea" id="RHEA:15641"/>
        <dbReference type="ChEBI" id="CHEBI:15361"/>
        <dbReference type="ChEBI" id="CHEBI:15378"/>
        <dbReference type="ChEBI" id="CHEBI:16452"/>
        <dbReference type="ChEBI" id="CHEBI:16526"/>
        <dbReference type="EC" id="4.1.1.112"/>
    </reaction>
</comment>
<comment type="catalytic activity">
    <reaction evidence="5 7">
        <text>a 3-acylpyruvate + H2O = a carboxylate + pyruvate + H(+)</text>
        <dbReference type="Rhea" id="RHEA:19009"/>
        <dbReference type="ChEBI" id="CHEBI:15361"/>
        <dbReference type="ChEBI" id="CHEBI:15377"/>
        <dbReference type="ChEBI" id="CHEBI:15378"/>
        <dbReference type="ChEBI" id="CHEBI:29067"/>
        <dbReference type="ChEBI" id="CHEBI:57278"/>
        <dbReference type="EC" id="3.7.1.5"/>
    </reaction>
</comment>
<comment type="catalytic activity">
    <reaction evidence="5 7">
        <text>acetylpyruvate + H2O = acetate + pyruvate + H(+)</text>
        <dbReference type="Rhea" id="RHEA:16097"/>
        <dbReference type="ChEBI" id="CHEBI:15360"/>
        <dbReference type="ChEBI" id="CHEBI:15361"/>
        <dbReference type="ChEBI" id="CHEBI:15377"/>
        <dbReference type="ChEBI" id="CHEBI:15378"/>
        <dbReference type="ChEBI" id="CHEBI:30089"/>
    </reaction>
</comment>
<comment type="catalytic activity">
    <reaction evidence="5">
        <text>3-fumarylpyruvate + H2O = fumarate + pyruvate + H(+)</text>
        <dbReference type="Rhea" id="RHEA:26168"/>
        <dbReference type="ChEBI" id="CHEBI:15361"/>
        <dbReference type="ChEBI" id="CHEBI:15377"/>
        <dbReference type="ChEBI" id="CHEBI:15378"/>
        <dbReference type="ChEBI" id="CHEBI:16854"/>
        <dbReference type="ChEBI" id="CHEBI:29806"/>
    </reaction>
</comment>
<comment type="cofactor">
    <cofactor evidence="5 13">
        <name>Mg(2+)</name>
        <dbReference type="ChEBI" id="CHEBI:18420"/>
    </cofactor>
    <cofactor evidence="5">
        <name>Mn(2+)</name>
        <dbReference type="ChEBI" id="CHEBI:29035"/>
    </cofactor>
    <text evidence="5">Requires a divalent metal cation for activity. Shows the highest activity in the presence of Mg(2+), followed by Mn(2+), whereas only weak activity is observed in the presence of Ca(2+) and Zn(2+).</text>
</comment>
<comment type="activity regulation">
    <text evidence="2">Oxaloacetate decarboxylation is competitively inhibited by oxalate.</text>
</comment>
<comment type="biophysicochemical properties">
    <kinetics>
        <KM evidence="8">15.8 uM for enol-oxaloacetate</KM>
        <KM evidence="6">32 uM for oxaloacetate</KM>
        <KM evidence="7">40.5 uM for oxaloacetate</KM>
        <KM evidence="5">4.6 uM for acetylpyruvate</KM>
        <KM evidence="7">22.8 uM for acetylpyruvate</KM>
        <Vmax evidence="8">69.0 umol/min/mg enzyme with enol-oxaloacetate as substrate</Vmax>
        <Vmax evidence="6 7">0.21 umol/min/mg enzyme for the decarboxylation of oxaloacetate</Vmax>
        <Vmax evidence="5">0.135 umol/min/mg enzyme for the hydrolysis of acetylpyruvate</Vmax>
        <Vmax evidence="7">0.142 umol/min/mg enzyme for the hydrolysis of acetylpyruvate</Vmax>
        <text evidence="8">kcat is 31.1 sec(-1) with enol-oxaloacetate as substrate.</text>
    </kinetics>
</comment>
<comment type="subunit">
    <text evidence="4">Homodimer.</text>
</comment>
<comment type="interaction">
    <interactant intactId="EBI-12902289">
        <id>Q6P587-2</id>
    </interactant>
    <interactant intactId="EBI-752094">
        <id>Q12982</id>
        <label>BNIP2</label>
    </interactant>
    <organismsDiffer>false</organismsDiffer>
    <experiments>3</experiments>
</comment>
<comment type="interaction">
    <interactant intactId="EBI-12902289">
        <id>Q6P587-2</id>
    </interactant>
    <interactant intactId="EBI-352682">
        <id>P04792</id>
        <label>HSPB1</label>
    </interactant>
    <organismsDiffer>false</organismsDiffer>
    <experiments>3</experiments>
</comment>
<comment type="interaction">
    <interactant intactId="EBI-12902289">
        <id>Q6P587-2</id>
    </interactant>
    <interactant intactId="EBI-475646">
        <id>P07196</id>
        <label>NEFL</label>
    </interactant>
    <organismsDiffer>false</organismsDiffer>
    <experiments>3</experiments>
</comment>
<comment type="interaction">
    <interactant intactId="EBI-12902289">
        <id>Q6P587-2</id>
    </interactant>
    <interactant intactId="EBI-749195">
        <id>P60891</id>
        <label>PRPS1</label>
    </interactant>
    <organismsDiffer>false</organismsDiffer>
    <experiments>3</experiments>
</comment>
<comment type="interaction">
    <interactant intactId="EBI-12902289">
        <id>Q6P587-2</id>
    </interactant>
    <interactant intactId="EBI-396669">
        <id>Q9Y3C5</id>
        <label>RNF11</label>
    </interactant>
    <organismsDiffer>false</organismsDiffer>
    <experiments>3</experiments>
</comment>
<comment type="interaction">
    <interactant intactId="EBI-12902289">
        <id>Q6P587-2</id>
    </interactant>
    <interactant intactId="EBI-720609">
        <id>O76024</id>
        <label>WFS1</label>
    </interactant>
    <organismsDiffer>false</organismsDiffer>
    <experiments>3</experiments>
</comment>
<comment type="subcellular location">
    <subcellularLocation>
        <location evidence="5">Mitochondrion</location>
    </subcellularLocation>
    <subcellularLocation>
        <location evidence="5">Cytoplasm</location>
        <location evidence="5">Cytosol</location>
    </subcellularLocation>
</comment>
<comment type="alternative products">
    <event type="alternative splicing"/>
    <event type="alternative initiation"/>
    <isoform>
        <id>Q6P587-4</id>
        <name>4</name>
        <sequence type="displayed"/>
    </isoform>
    <isoform>
        <id>Q6P587-1</id>
        <name>1</name>
        <sequence type="described" ref="VSP_062240"/>
    </isoform>
    <isoform>
        <id>Q6P587-2</id>
        <name>2</name>
        <sequence type="described" ref="VSP_062241"/>
    </isoform>
    <isoform>
        <id>Q6P587-3</id>
        <name>3</name>
        <sequence type="described" ref="VSP_062242"/>
    </isoform>
</comment>
<comment type="tissue specificity">
    <text evidence="5">Ubiquitous (at protein level).</text>
</comment>
<comment type="miscellaneous">
    <molecule>Isoform 1</molecule>
    <text evidence="12">Produced by alternative initiation (Probable). Based on proteomic data (Probable).</text>
</comment>
<comment type="similarity">
    <text evidence="12">Belongs to the FAH family.</text>
</comment>
<comment type="sequence caution" evidence="12">
    <conflict type="erroneous initiation">
        <sequence resource="EMBL-CDS" id="AAH63017"/>
    </conflict>
    <text>Extended N-terminus.</text>
</comment>